<keyword id="KW-0002">3D-structure</keyword>
<keyword id="KW-0378">Hydrolase</keyword>
<keyword id="KW-1185">Reference proteome</keyword>
<keyword id="KW-0964">Secreted</keyword>
<keyword id="KW-0843">Virulence</keyword>
<dbReference type="EC" id="3.1.3.-"/>
<dbReference type="EMBL" id="AF021817">
    <property type="protein sequence ID" value="AAC46234.1"/>
    <property type="molecule type" value="Genomic_DNA"/>
</dbReference>
<dbReference type="EMBL" id="AE006468">
    <property type="protein sequence ID" value="AAL20023.1"/>
    <property type="molecule type" value="Genomic_DNA"/>
</dbReference>
<dbReference type="EMBL" id="AF213335">
    <property type="protein sequence ID" value="AAF21057.2"/>
    <property type="molecule type" value="Genomic_DNA"/>
</dbReference>
<dbReference type="RefSeq" id="NP_460064.1">
    <property type="nucleotide sequence ID" value="NC_003197.2"/>
</dbReference>
<dbReference type="RefSeq" id="WP_001166946.1">
    <property type="nucleotide sequence ID" value="NC_003197.2"/>
</dbReference>
<dbReference type="PDB" id="4DID">
    <property type="method" value="X-ray"/>
    <property type="resolution" value="2.35 A"/>
    <property type="chains" value="B=30-181"/>
</dbReference>
<dbReference type="PDB" id="8JZL">
    <property type="method" value="EM"/>
    <property type="resolution" value="2.62 A"/>
    <property type="chains" value="A/B/C/D/E/F=64-561"/>
</dbReference>
<dbReference type="PDBsum" id="4DID"/>
<dbReference type="PDBsum" id="8JZL"/>
<dbReference type="EMDB" id="EMD-36746"/>
<dbReference type="SMR" id="O30916"/>
<dbReference type="IntAct" id="O30916">
    <property type="interactions" value="1"/>
</dbReference>
<dbReference type="STRING" id="99287.STM1091"/>
<dbReference type="PaxDb" id="99287-STM1091"/>
<dbReference type="GeneID" id="1252609"/>
<dbReference type="KEGG" id="stm:STM1091"/>
<dbReference type="PATRIC" id="fig|99287.12.peg.1155"/>
<dbReference type="HOGENOM" id="CLU_025781_0_0_6"/>
<dbReference type="OMA" id="PCWNCKS"/>
<dbReference type="BioCyc" id="MetaCyc:MONOMER-15186"/>
<dbReference type="BioCyc" id="SENT99287:STM1091-MONOMER"/>
<dbReference type="BRENDA" id="3.1.3.78">
    <property type="organism ID" value="5542"/>
</dbReference>
<dbReference type="PHI-base" id="PHI:6738"/>
<dbReference type="PHI-base" id="PHI:7236"/>
<dbReference type="PHI-base" id="PHI:7920"/>
<dbReference type="PHI-base" id="PHI:8298"/>
<dbReference type="Proteomes" id="UP000001014">
    <property type="component" value="Chromosome"/>
</dbReference>
<dbReference type="GO" id="GO:0071944">
    <property type="term" value="C:cell periphery"/>
    <property type="evidence" value="ECO:0000315"/>
    <property type="project" value="AgBase"/>
</dbReference>
<dbReference type="GO" id="GO:0020003">
    <property type="term" value="C:symbiont-containing vacuole"/>
    <property type="evidence" value="ECO:0000314"/>
    <property type="project" value="AgBase"/>
</dbReference>
<dbReference type="GO" id="GO:0042577">
    <property type="term" value="F:lipid phosphatase activity"/>
    <property type="evidence" value="ECO:0000315"/>
    <property type="project" value="AgBase"/>
</dbReference>
<dbReference type="GO" id="GO:0140677">
    <property type="term" value="F:molecular function activator activity"/>
    <property type="evidence" value="ECO:0000269"/>
    <property type="project" value="DisProt"/>
</dbReference>
<dbReference type="GO" id="GO:0030308">
    <property type="term" value="P:negative regulation of cell growth"/>
    <property type="evidence" value="ECO:0000315"/>
    <property type="project" value="AgBase"/>
</dbReference>
<dbReference type="GO" id="GO:0023057">
    <property type="term" value="P:negative regulation of signaling"/>
    <property type="evidence" value="ECO:0000315"/>
    <property type="project" value="AgBase"/>
</dbReference>
<dbReference type="GO" id="GO:0045740">
    <property type="term" value="P:positive regulation of DNA replication"/>
    <property type="evidence" value="ECO:0000314"/>
    <property type="project" value="AgBase"/>
</dbReference>
<dbReference type="GO" id="GO:0045859">
    <property type="term" value="P:regulation of protein kinase activity"/>
    <property type="evidence" value="ECO:0000315"/>
    <property type="project" value="AgBase"/>
</dbReference>
<dbReference type="GO" id="GO:0044075">
    <property type="term" value="P:symbiont-mediated perturbation of host vacuole organization"/>
    <property type="evidence" value="ECO:0000269"/>
    <property type="project" value="SigSci"/>
</dbReference>
<dbReference type="GO" id="GO:0141083">
    <property type="term" value="P:symbiont-mediated suppression of host reactive oxygen species generation"/>
    <property type="evidence" value="ECO:0000269"/>
    <property type="project" value="SigSci"/>
</dbReference>
<dbReference type="GO" id="GO:0039527">
    <property type="term" value="P:symbiont-mediated suppression of host TRAF-mediated signal transduction"/>
    <property type="evidence" value="ECO:0000269"/>
    <property type="project" value="SigSci"/>
</dbReference>
<dbReference type="DisProt" id="DP01166"/>
<dbReference type="FunFam" id="1.20.58.450:FF:000001">
    <property type="entry name" value="SPI-1 type III secretion system effector inositol phosphate phosphatase SopB"/>
    <property type="match status" value="1"/>
</dbReference>
<dbReference type="Gene3D" id="1.20.58.450">
    <property type="entry name" value="Cell division control protein 42 homolog"/>
    <property type="match status" value="1"/>
</dbReference>
<dbReference type="InterPro" id="IPR008108">
    <property type="entry name" value="IpgD/SopB"/>
</dbReference>
<dbReference type="NCBIfam" id="NF011905">
    <property type="entry name" value="PRK15378.1"/>
    <property type="match status" value="1"/>
</dbReference>
<dbReference type="Pfam" id="PF05925">
    <property type="entry name" value="IpgD"/>
    <property type="match status" value="1"/>
</dbReference>
<dbReference type="PRINTS" id="PR01734">
    <property type="entry name" value="TYPE3OMBPROT"/>
</dbReference>
<protein>
    <recommendedName>
        <fullName>Inositol phosphate phosphatase SopB</fullName>
        <ecNumber>3.1.3.-</ecNumber>
    </recommendedName>
    <alternativeName>
        <fullName>Effector protein SopB</fullName>
    </alternativeName>
</protein>
<gene>
    <name type="primary">sopB</name>
    <name type="synonym">sigD</name>
    <name type="ordered locus">STM1091</name>
</gene>
<reference key="1">
    <citation type="journal article" date="1998" name="J. Bacteriol.">
        <title>Identification of a novel Salmonella invasion locus homologous to Shigella ipgDE.</title>
        <authorList>
            <person name="Hong K.H."/>
            <person name="Miller V.L."/>
        </authorList>
    </citation>
    <scope>NUCLEOTIDE SEQUENCE [GENOMIC DNA]</scope>
    <source>
        <strain>ATCC 14028s / SGSG 2262</strain>
    </source>
</reference>
<reference key="2">
    <citation type="journal article" date="2001" name="Nature">
        <title>Complete genome sequence of Salmonella enterica serovar Typhimurium LT2.</title>
        <authorList>
            <person name="McClelland M."/>
            <person name="Sanderson K.E."/>
            <person name="Spieth J."/>
            <person name="Clifton S.W."/>
            <person name="Latreille P."/>
            <person name="Courtney L."/>
            <person name="Porwollik S."/>
            <person name="Ali J."/>
            <person name="Dante M."/>
            <person name="Du F."/>
            <person name="Hou S."/>
            <person name="Layman D."/>
            <person name="Leonard S."/>
            <person name="Nguyen C."/>
            <person name="Scott K."/>
            <person name="Holmes A."/>
            <person name="Grewal N."/>
            <person name="Mulvaney E."/>
            <person name="Ryan E."/>
            <person name="Sun H."/>
            <person name="Florea L."/>
            <person name="Miller W."/>
            <person name="Stoneking T."/>
            <person name="Nhan M."/>
            <person name="Waterston R."/>
            <person name="Wilson R.K."/>
        </authorList>
    </citation>
    <scope>NUCLEOTIDE SEQUENCE [LARGE SCALE GENOMIC DNA]</scope>
    <source>
        <strain>LT2 / SGSC1412 / ATCC 700720</strain>
    </source>
</reference>
<reference key="3">
    <citation type="journal article" date="2000" name="Int. J. Med. Microbiol.">
        <title>Prevalence and polymorphism of genes encoding translocated effector proteins among clinical isolates of Salmonella enterica.</title>
        <authorList>
            <person name="Prager R."/>
            <person name="Mirold S."/>
            <person name="Tietze E."/>
            <person name="Strutz U."/>
            <person name="Knuppel B."/>
            <person name="Rabsch W."/>
            <person name="Hardt W.-D."/>
            <person name="Tschape H."/>
        </authorList>
    </citation>
    <scope>NUCLEOTIDE SEQUENCE [GENOMIC DNA] OF 97-529</scope>
    <source>
        <strain>IE1534</strain>
    </source>
</reference>
<reference key="4">
    <citation type="journal article" date="2001" name="J. Bacteriol.">
        <title>Salmonella host cell invasion emerged by acquisition of a mosaic of separate genetic elements, including Salmonella pathogenicity island 1 (SPI1), SPI5, and sopE2.</title>
        <authorList>
            <person name="Mirold S."/>
            <person name="Ehrbar K."/>
            <person name="Weissmueller A."/>
            <person name="Prager R."/>
            <person name="Tschaepe H."/>
            <person name="Ruessmann H."/>
            <person name="Hardt W.-D."/>
        </authorList>
    </citation>
    <scope>ROLE IN HOST CELL INVASION</scope>
    <scope>SUBCELLULAR LOCATION</scope>
    <source>
        <strain>SL1344</strain>
    </source>
</reference>
<reference key="5">
    <citation type="journal article" date="2001" name="Mol. Microbiol.">
        <title>A Salmonella inositol polyphosphatase acts in conjunction with other bacterial effectors to promote host cell actin cytoskeleton rearrangements and bacterial internalization.</title>
        <authorList>
            <person name="Zhou D."/>
            <person name="Chen L.-M."/>
            <person name="Hernandez L.D."/>
            <person name="Shears S.B."/>
            <person name="Galan J.E."/>
        </authorList>
    </citation>
    <scope>FUNCTION</scope>
</reference>
<reference key="6">
    <citation type="journal article" date="2002" name="Nat. Cell Biol.">
        <title>Elimination of host cell PtdIns(4,5)P(2) by bacterial SigD promotes membrane fission during invasion by Salmonella.</title>
        <authorList>
            <person name="Terebiznik M.R."/>
            <person name="Vieira O.V."/>
            <person name="Marcus S.L."/>
            <person name="Slade A."/>
            <person name="Yip C.M."/>
            <person name="Trimble W.S."/>
            <person name="Meyer T."/>
            <person name="Finlay B.B."/>
            <person name="Grinstein S."/>
        </authorList>
    </citation>
    <scope>FUNCTION</scope>
    <source>
        <strain>SLI344</strain>
    </source>
</reference>
<reference key="7">
    <citation type="journal article" date="2004" name="Science">
        <title>Salmonella modulates vesicular traffic by altering phosphoinositide metabolism.</title>
        <authorList>
            <person name="Hernandez L.D."/>
            <person name="Hueffer K."/>
            <person name="Wenk M.R."/>
            <person name="Galan J.E."/>
        </authorList>
    </citation>
    <scope>FUNCTION</scope>
</reference>
<reference key="8">
    <citation type="journal article" date="2001" name="FEBS Lett.">
        <title>A synaptojanin-homologous region of Salmonella typhimurium SigD is essential for inositol phosphatase activity and Akt activation.</title>
        <authorList>
            <person name="Marcus S.L."/>
            <person name="Wenk M.R."/>
            <person name="Steele-Mortimer O."/>
            <person name="Finlay B.B."/>
        </authorList>
    </citation>
    <scope>MUTAGENESIS OF CYS-460; LYS-525 AND LYS-528</scope>
</reference>
<accession>O30916</accession>
<accession>Q8ZQ57</accession>
<accession>Q9L889</accession>
<sequence length="561" mass="61935">MQIQSFYHSASLKTQEAFKSLQKTLYNGMQILSGQGKAPAKAPDARPEIIVLREPGATWGNYLQHQKASNHSLHNLYNLQRDLLTVAATVLGKQDPVLTSMANQMELAKVKADRPATKQEEAAAKALKKNLIELIAARTQQQDGLPAKEAHRFAAVAFRDAQVKQLNNQPWQTIKNTLTHNGHHYTNTQLPAAEMKIGAKDIFPSAYEGKGVCSWDTKNIHHANNLWMSTVSVHEDGKDKTLFCGIRHGVLSPYHEKDPLLRHVGAENKAKEVLTAALFSKPELLNKALAGEAVSLKLVSVGLLTASNIFGKEGTMVEDQMRAWQSLTQPGKMIHLKIRNKDGDLQTVKIKPDVAAFNVGVNELALKLGFGLKASDSYNAEALHQLLGNDLRPEARPGGWVGEWLAQYPDNYEVVNTLARQIKDIWKNNQHHKDGGEPYKLAQRLAMLAHEIDAVPAWNCKSGKDRTGMMDSEIKREIISLHQTHMLSAPGSLPDSGGQKIFQKVLLNSGNLEIQKQNTGGAGNKVMKNLSPEVLNLSYQKRVGDENIWQSVKGISSLITS</sequence>
<name>SOPB_SALTY</name>
<comment type="function">
    <text evidence="3 4 6 7">Converts phosphatidylinositol 3,4,5-trisphosphate (PtdIns 3,4,5-P3) to PtdIns 3-P and prevents the transition of PtdIns 3-P to PtdIns 3,5-P2. It is one of the known effectors injected by Salmonella into the host cell and is required for invasion and for an efficient generation and maintenance of Salmonella-containing vacuole (SVC). Alteration of the phosphoinositide composition of the plasma membrane causes membrane ruffling and actin cytoskeleton rearrangements. The persistence of PtdIns 3-P diverts the SCV from the endocytic pathway resulting in enlarged vesicles, which are essential to create a favorable environment where Salmonella can replicate and avoid immune defenses of the host cell.</text>
</comment>
<comment type="interaction">
    <interactant intactId="EBI-11167349">
        <id>O30916</id>
    </interactant>
    <interactant intactId="EBI-81752">
        <id>P60953</id>
        <label>CDC42</label>
    </interactant>
    <organismsDiffer>true</organismsDiffer>
    <experiments>5</experiments>
</comment>
<comment type="subcellular location">
    <subcellularLocation>
        <location evidence="1">Secreted</location>
    </subcellularLocation>
    <text evidence="1">Secreted via the type III secretion system 1 (SPI-1 T3SS).</text>
</comment>
<comment type="domain">
    <text>Contains the consensus sequence Cys-X(5)-Arg characteristic of Mg-independent phosphatases.</text>
</comment>
<comment type="similarity">
    <text evidence="8">Belongs to the phosphatase IpgD/SopB family.</text>
</comment>
<feature type="chain" id="PRO_0000220495" description="Inositol phosphate phosphatase SopB">
    <location>
        <begin position="1"/>
        <end position="561"/>
    </location>
</feature>
<feature type="short sequence motif" description="CX5R motif">
    <location>
        <begin position="460"/>
        <end position="466"/>
    </location>
</feature>
<feature type="active site" evidence="2">
    <location>
        <position position="460"/>
    </location>
</feature>
<feature type="mutagenesis site" description="Loss of activity." evidence="5">
    <original>C</original>
    <variation>S</variation>
    <location>
        <position position="460"/>
    </location>
</feature>
<feature type="mutagenesis site" description="Decrease in activity." evidence="5">
    <original>K</original>
    <variation>A</variation>
    <location>
        <position position="525"/>
    </location>
</feature>
<feature type="mutagenesis site" description="Loss of activity." evidence="5">
    <original>K</original>
    <variation>A</variation>
    <location>
        <position position="528"/>
    </location>
</feature>
<feature type="sequence conflict" description="In Ref. 1; AAC46234." evidence="8" ref="1">
    <original>C</original>
    <variation>FD</variation>
    <location>
        <position position="244"/>
    </location>
</feature>
<feature type="sequence conflict" description="In Ref. 1; AAC46234." evidence="8" ref="1">
    <original>V</original>
    <variation>VV</variation>
    <location>
        <position position="354"/>
    </location>
</feature>
<feature type="sequence conflict" description="In Ref. 1; AAC46234." evidence="8" ref="1">
    <original>R</original>
    <variation>G</variation>
    <location>
        <position position="476"/>
    </location>
</feature>
<feature type="strand" evidence="9">
    <location>
        <begin position="49"/>
        <end position="52"/>
    </location>
</feature>
<feature type="helix" evidence="9">
    <location>
        <begin position="59"/>
        <end position="62"/>
    </location>
</feature>
<feature type="strand" evidence="9">
    <location>
        <begin position="69"/>
        <end position="72"/>
    </location>
</feature>
<feature type="helix" evidence="9">
    <location>
        <begin position="73"/>
        <end position="90"/>
    </location>
</feature>
<feature type="turn" evidence="9">
    <location>
        <begin position="91"/>
        <end position="93"/>
    </location>
</feature>
<feature type="helix" evidence="9">
    <location>
        <begin position="96"/>
        <end position="107"/>
    </location>
</feature>
<feature type="helix" evidence="9">
    <location>
        <begin position="108"/>
        <end position="110"/>
    </location>
</feature>
<feature type="helix" evidence="9">
    <location>
        <begin position="118"/>
        <end position="142"/>
    </location>
</feature>
<feature type="helix" evidence="9">
    <location>
        <begin position="147"/>
        <end position="166"/>
    </location>
</feature>
<evidence type="ECO:0000250" key="1"/>
<evidence type="ECO:0000255" key="2"/>
<evidence type="ECO:0000269" key="3">
    <source>
    </source>
</evidence>
<evidence type="ECO:0000269" key="4">
    <source>
    </source>
</evidence>
<evidence type="ECO:0000269" key="5">
    <source>
    </source>
</evidence>
<evidence type="ECO:0000269" key="6">
    <source>
    </source>
</evidence>
<evidence type="ECO:0000269" key="7">
    <source>
    </source>
</evidence>
<evidence type="ECO:0000305" key="8"/>
<evidence type="ECO:0007829" key="9">
    <source>
        <dbReference type="PDB" id="4DID"/>
    </source>
</evidence>
<organism>
    <name type="scientific">Salmonella typhimurium (strain LT2 / SGSC1412 / ATCC 700720)</name>
    <dbReference type="NCBI Taxonomy" id="99287"/>
    <lineage>
        <taxon>Bacteria</taxon>
        <taxon>Pseudomonadati</taxon>
        <taxon>Pseudomonadota</taxon>
        <taxon>Gammaproteobacteria</taxon>
        <taxon>Enterobacterales</taxon>
        <taxon>Enterobacteriaceae</taxon>
        <taxon>Salmonella</taxon>
    </lineage>
</organism>
<proteinExistence type="evidence at protein level"/>